<feature type="chain" id="PRO_0000167545" description="Ribosome-recycling factor">
    <location>
        <begin position="1"/>
        <end position="184"/>
    </location>
</feature>
<feature type="region of interest" description="Disordered" evidence="2">
    <location>
        <begin position="141"/>
        <end position="165"/>
    </location>
</feature>
<reference key="1">
    <citation type="journal article" date="2003" name="Mol. Microbiol.">
        <title>Genome-based analysis of virulence genes in a non-biofilm-forming Staphylococcus epidermidis strain (ATCC 12228).</title>
        <authorList>
            <person name="Zhang Y.-Q."/>
            <person name="Ren S.-X."/>
            <person name="Li H.-L."/>
            <person name="Wang Y.-X."/>
            <person name="Fu G."/>
            <person name="Yang J."/>
            <person name="Qin Z.-Q."/>
            <person name="Miao Y.-G."/>
            <person name="Wang W.-Y."/>
            <person name="Chen R.-S."/>
            <person name="Shen Y."/>
            <person name="Chen Z."/>
            <person name="Yuan Z.-H."/>
            <person name="Zhao G.-P."/>
            <person name="Qu D."/>
            <person name="Danchin A."/>
            <person name="Wen Y.-M."/>
        </authorList>
    </citation>
    <scope>NUCLEOTIDE SEQUENCE [LARGE SCALE GENOMIC DNA]</scope>
    <source>
        <strain>ATCC 12228 / FDA PCI 1200</strain>
    </source>
</reference>
<accession>Q8CSU0</accession>
<sequence length="184" mass="20332">MSDIIKDTKSRMQKSIDNLSRELANISAGRANSNLLNGVTVDYYGAPTPVQQLASINVPEARLLVISPYDKSSVADIEKAIIAANLGVNPTSDGEVIRISVPALTEERRKELVKEVKKIGEDAKVSIRNIRRDINDQLKKDEKNGDITEDDLRSQTDDVQKATDNSIKEIDQLVADKEKDIMSV</sequence>
<organism>
    <name type="scientific">Staphylococcus epidermidis (strain ATCC 12228 / FDA PCI 1200)</name>
    <dbReference type="NCBI Taxonomy" id="176280"/>
    <lineage>
        <taxon>Bacteria</taxon>
        <taxon>Bacillati</taxon>
        <taxon>Bacillota</taxon>
        <taxon>Bacilli</taxon>
        <taxon>Bacillales</taxon>
        <taxon>Staphylococcaceae</taxon>
        <taxon>Staphylococcus</taxon>
    </lineage>
</organism>
<evidence type="ECO:0000255" key="1">
    <source>
        <dbReference type="HAMAP-Rule" id="MF_00040"/>
    </source>
</evidence>
<evidence type="ECO:0000256" key="2">
    <source>
        <dbReference type="SAM" id="MobiDB-lite"/>
    </source>
</evidence>
<comment type="function">
    <text evidence="1">Responsible for the release of ribosomes from messenger RNA at the termination of protein biosynthesis. May increase the efficiency of translation by recycling ribosomes from one round of translation to another.</text>
</comment>
<comment type="subcellular location">
    <subcellularLocation>
        <location evidence="1">Cytoplasm</location>
    </subcellularLocation>
</comment>
<comment type="similarity">
    <text evidence="1">Belongs to the RRF family.</text>
</comment>
<dbReference type="EMBL" id="AE015929">
    <property type="protein sequence ID" value="AAO04532.1"/>
    <property type="molecule type" value="Genomic_DNA"/>
</dbReference>
<dbReference type="RefSeq" id="NP_764490.1">
    <property type="nucleotide sequence ID" value="NC_004461.1"/>
</dbReference>
<dbReference type="RefSeq" id="WP_001829472.1">
    <property type="nucleotide sequence ID" value="NZ_WBME01000001.1"/>
</dbReference>
<dbReference type="SMR" id="Q8CSU0"/>
<dbReference type="GeneID" id="50018929"/>
<dbReference type="KEGG" id="sep:SE_0935"/>
<dbReference type="PATRIC" id="fig|176280.10.peg.910"/>
<dbReference type="eggNOG" id="COG0233">
    <property type="taxonomic scope" value="Bacteria"/>
</dbReference>
<dbReference type="HOGENOM" id="CLU_073981_2_0_9"/>
<dbReference type="OrthoDB" id="9804006at2"/>
<dbReference type="Proteomes" id="UP000001411">
    <property type="component" value="Chromosome"/>
</dbReference>
<dbReference type="GO" id="GO:0005737">
    <property type="term" value="C:cytoplasm"/>
    <property type="evidence" value="ECO:0007669"/>
    <property type="project" value="UniProtKB-SubCell"/>
</dbReference>
<dbReference type="GO" id="GO:0043023">
    <property type="term" value="F:ribosomal large subunit binding"/>
    <property type="evidence" value="ECO:0007669"/>
    <property type="project" value="TreeGrafter"/>
</dbReference>
<dbReference type="GO" id="GO:0006415">
    <property type="term" value="P:translational termination"/>
    <property type="evidence" value="ECO:0007669"/>
    <property type="project" value="UniProtKB-UniRule"/>
</dbReference>
<dbReference type="CDD" id="cd00520">
    <property type="entry name" value="RRF"/>
    <property type="match status" value="1"/>
</dbReference>
<dbReference type="FunFam" id="1.10.132.20:FF:000001">
    <property type="entry name" value="Ribosome-recycling factor"/>
    <property type="match status" value="1"/>
</dbReference>
<dbReference type="FunFam" id="3.30.1360.40:FF:000001">
    <property type="entry name" value="Ribosome-recycling factor"/>
    <property type="match status" value="1"/>
</dbReference>
<dbReference type="Gene3D" id="3.30.1360.40">
    <property type="match status" value="1"/>
</dbReference>
<dbReference type="Gene3D" id="1.10.132.20">
    <property type="entry name" value="Ribosome-recycling factor"/>
    <property type="match status" value="1"/>
</dbReference>
<dbReference type="HAMAP" id="MF_00040">
    <property type="entry name" value="RRF"/>
    <property type="match status" value="1"/>
</dbReference>
<dbReference type="InterPro" id="IPR002661">
    <property type="entry name" value="Ribosome_recyc_fac"/>
</dbReference>
<dbReference type="InterPro" id="IPR023584">
    <property type="entry name" value="Ribosome_recyc_fac_dom"/>
</dbReference>
<dbReference type="InterPro" id="IPR036191">
    <property type="entry name" value="RRF_sf"/>
</dbReference>
<dbReference type="NCBIfam" id="TIGR00496">
    <property type="entry name" value="frr"/>
    <property type="match status" value="1"/>
</dbReference>
<dbReference type="PANTHER" id="PTHR20982:SF3">
    <property type="entry name" value="MITOCHONDRIAL RIBOSOME RECYCLING FACTOR PSEUDO 1"/>
    <property type="match status" value="1"/>
</dbReference>
<dbReference type="PANTHER" id="PTHR20982">
    <property type="entry name" value="RIBOSOME RECYCLING FACTOR"/>
    <property type="match status" value="1"/>
</dbReference>
<dbReference type="Pfam" id="PF01765">
    <property type="entry name" value="RRF"/>
    <property type="match status" value="1"/>
</dbReference>
<dbReference type="SUPFAM" id="SSF55194">
    <property type="entry name" value="Ribosome recycling factor, RRF"/>
    <property type="match status" value="1"/>
</dbReference>
<name>RRF_STAES</name>
<keyword id="KW-0963">Cytoplasm</keyword>
<keyword id="KW-0648">Protein biosynthesis</keyword>
<protein>
    <recommendedName>
        <fullName evidence="1">Ribosome-recycling factor</fullName>
        <shortName evidence="1">RRF</shortName>
    </recommendedName>
    <alternativeName>
        <fullName evidence="1">Ribosome-releasing factor</fullName>
    </alternativeName>
</protein>
<proteinExistence type="inferred from homology"/>
<gene>
    <name evidence="1" type="primary">frr</name>
    <name type="ordered locus">SE_0935</name>
</gene>